<sequence length="484" mass="53293">MAVLLRKVWGSVLARAAAGAAPPEAFAAAASPRRPQAAGEYGSLGALDVLPIDVLAQILRLLGPADAARSTAVCRAWRLLASDNGLWAFFLRLGPDPWELVVFAETHLGAGPALHPGLYYDSSPQLSFKHVYTRRAVVPGSIIVDGGSGYCKYGWSKYAAPSGRCATFLEFGNIESPMYARLRHFLSTIYTRMQVKPSTQPIIVVLPLCHSDDTESARASRKQYRDTLYSVLFDMNVPAVCSVDQAVLALYAAKRTSGIVVNIGFNATSIVPIFQGRVMHEIGVETVGQGALKLTGFLKELMQQRNITFESLYTVRTIKEKLCYVAADYEAEKRKDTQASCEVDGEGWFTLSEERFKTAEILFQPQIGGVRAMGLHKAVSLCMDHCYNSEVFGDDNWYKTVVLSGGSSCLPGLSERLEKELRELLPAHISEGIRVIPPPFGTDSAWFGAKMISNVSTFTEAWCIKKKQFRQKTRRNGPSFVNVW</sequence>
<comment type="subcellular location">
    <subcellularLocation>
        <location evidence="1">Nucleus</location>
        <location evidence="1">Nucleolus</location>
    </subcellularLocation>
    <subcellularLocation>
        <location evidence="1">Cytoplasm</location>
    </subcellularLocation>
    <text evidence="1">Localized to the nucleolus in interphase cells and dispersed in the cytoplasm in mitotic cells.</text>
</comment>
<comment type="similarity">
    <text evidence="3">Belongs to the actin family. Plant ARP8 subfamily.</text>
</comment>
<comment type="sequence caution" evidence="3">
    <conflict type="frameshift">
        <sequence resource="EMBL" id="AK100366"/>
    </conflict>
</comment>
<comment type="sequence caution" evidence="3">
    <conflict type="erroneous gene model prediction">
        <sequence resource="EMBL-CDS" id="BAF16104"/>
    </conflict>
</comment>
<comment type="sequence caution" evidence="3">
    <conflict type="erroneous gene model prediction">
        <sequence resource="EMBL-CDS" id="CAJ86197"/>
    </conflict>
</comment>
<comment type="sequence caution" evidence="3">
    <conflict type="frameshift">
        <sequence resource="EMBL" id="CM000141"/>
    </conflict>
</comment>
<gene>
    <name type="primary">ARP8</name>
    <name type="ordered locus">Os04g0667700</name>
    <name type="ordered locus">LOC_Os04g57210</name>
    <name type="ORF">B0811B10.7</name>
    <name type="ORF">H1005F08.28</name>
    <name type="ORF">OsJ_015820</name>
    <name type="ORF">OSJNBa0043A12.5</name>
</gene>
<reference key="1">
    <citation type="journal article" date="2007" name="Genetics">
        <title>The extent of linkage disequilibrium in rice (Oryza sativa L.).</title>
        <authorList>
            <person name="Mather K.A."/>
            <person name="Caicedo A.L."/>
            <person name="Polato N.R."/>
            <person name="Olsen K.M."/>
            <person name="McCouch S."/>
            <person name="Purugganan M.D."/>
        </authorList>
    </citation>
    <scope>NUCLEOTIDE SEQUENCE [GENOMIC DNA]</scope>
</reference>
<reference key="2">
    <citation type="journal article" date="2002" name="Nature">
        <title>Sequence and analysis of rice chromosome 4.</title>
        <authorList>
            <person name="Feng Q."/>
            <person name="Zhang Y."/>
            <person name="Hao P."/>
            <person name="Wang S."/>
            <person name="Fu G."/>
            <person name="Huang Y."/>
            <person name="Li Y."/>
            <person name="Zhu J."/>
            <person name="Liu Y."/>
            <person name="Hu X."/>
            <person name="Jia P."/>
            <person name="Zhang Y."/>
            <person name="Zhao Q."/>
            <person name="Ying K."/>
            <person name="Yu S."/>
            <person name="Tang Y."/>
            <person name="Weng Q."/>
            <person name="Zhang L."/>
            <person name="Lu Y."/>
            <person name="Mu J."/>
            <person name="Lu Y."/>
            <person name="Zhang L.S."/>
            <person name="Yu Z."/>
            <person name="Fan D."/>
            <person name="Liu X."/>
            <person name="Lu T."/>
            <person name="Li C."/>
            <person name="Wu Y."/>
            <person name="Sun T."/>
            <person name="Lei H."/>
            <person name="Li T."/>
            <person name="Hu H."/>
            <person name="Guan J."/>
            <person name="Wu M."/>
            <person name="Zhang R."/>
            <person name="Zhou B."/>
            <person name="Chen Z."/>
            <person name="Chen L."/>
            <person name="Jin Z."/>
            <person name="Wang R."/>
            <person name="Yin H."/>
            <person name="Cai Z."/>
            <person name="Ren S."/>
            <person name="Lv G."/>
            <person name="Gu W."/>
            <person name="Zhu G."/>
            <person name="Tu Y."/>
            <person name="Jia J."/>
            <person name="Zhang Y."/>
            <person name="Chen J."/>
            <person name="Kang H."/>
            <person name="Chen X."/>
            <person name="Shao C."/>
            <person name="Sun Y."/>
            <person name="Hu Q."/>
            <person name="Zhang X."/>
            <person name="Zhang W."/>
            <person name="Wang L."/>
            <person name="Ding C."/>
            <person name="Sheng H."/>
            <person name="Gu J."/>
            <person name="Chen S."/>
            <person name="Ni L."/>
            <person name="Zhu F."/>
            <person name="Chen W."/>
            <person name="Lan L."/>
            <person name="Lai Y."/>
            <person name="Cheng Z."/>
            <person name="Gu M."/>
            <person name="Jiang J."/>
            <person name="Li J."/>
            <person name="Hong G."/>
            <person name="Xue Y."/>
            <person name="Han B."/>
        </authorList>
    </citation>
    <scope>NUCLEOTIDE SEQUENCE [LARGE SCALE GENOMIC DNA]</scope>
    <source>
        <strain>cv. Nipponbare</strain>
    </source>
</reference>
<reference key="3">
    <citation type="journal article" date="2005" name="Nature">
        <title>The map-based sequence of the rice genome.</title>
        <authorList>
            <consortium name="International rice genome sequencing project (IRGSP)"/>
        </authorList>
    </citation>
    <scope>NUCLEOTIDE SEQUENCE [LARGE SCALE GENOMIC DNA]</scope>
    <source>
        <strain>cv. Nipponbare</strain>
    </source>
</reference>
<reference key="4">
    <citation type="journal article" date="2008" name="Nucleic Acids Res.">
        <title>The rice annotation project database (RAP-DB): 2008 update.</title>
        <authorList>
            <consortium name="The rice annotation project (RAP)"/>
        </authorList>
    </citation>
    <scope>GENOME REANNOTATION</scope>
    <source>
        <strain>cv. Nipponbare</strain>
    </source>
</reference>
<reference key="5">
    <citation type="journal article" date="2013" name="Rice">
        <title>Improvement of the Oryza sativa Nipponbare reference genome using next generation sequence and optical map data.</title>
        <authorList>
            <person name="Kawahara Y."/>
            <person name="de la Bastide M."/>
            <person name="Hamilton J.P."/>
            <person name="Kanamori H."/>
            <person name="McCombie W.R."/>
            <person name="Ouyang S."/>
            <person name="Schwartz D.C."/>
            <person name="Tanaka T."/>
            <person name="Wu J."/>
            <person name="Zhou S."/>
            <person name="Childs K.L."/>
            <person name="Davidson R.M."/>
            <person name="Lin H."/>
            <person name="Quesada-Ocampo L."/>
            <person name="Vaillancourt B."/>
            <person name="Sakai H."/>
            <person name="Lee S.S."/>
            <person name="Kim J."/>
            <person name="Numa H."/>
            <person name="Itoh T."/>
            <person name="Buell C.R."/>
            <person name="Matsumoto T."/>
        </authorList>
    </citation>
    <scope>GENOME REANNOTATION</scope>
    <source>
        <strain>cv. Nipponbare</strain>
    </source>
</reference>
<reference key="6">
    <citation type="journal article" date="2005" name="PLoS Biol.">
        <title>The genomes of Oryza sativa: a history of duplications.</title>
        <authorList>
            <person name="Yu J."/>
            <person name="Wang J."/>
            <person name="Lin W."/>
            <person name="Li S."/>
            <person name="Li H."/>
            <person name="Zhou J."/>
            <person name="Ni P."/>
            <person name="Dong W."/>
            <person name="Hu S."/>
            <person name="Zeng C."/>
            <person name="Zhang J."/>
            <person name="Zhang Y."/>
            <person name="Li R."/>
            <person name="Xu Z."/>
            <person name="Li S."/>
            <person name="Li X."/>
            <person name="Zheng H."/>
            <person name="Cong L."/>
            <person name="Lin L."/>
            <person name="Yin J."/>
            <person name="Geng J."/>
            <person name="Li G."/>
            <person name="Shi J."/>
            <person name="Liu J."/>
            <person name="Lv H."/>
            <person name="Li J."/>
            <person name="Wang J."/>
            <person name="Deng Y."/>
            <person name="Ran L."/>
            <person name="Shi X."/>
            <person name="Wang X."/>
            <person name="Wu Q."/>
            <person name="Li C."/>
            <person name="Ren X."/>
            <person name="Wang J."/>
            <person name="Wang X."/>
            <person name="Li D."/>
            <person name="Liu D."/>
            <person name="Zhang X."/>
            <person name="Ji Z."/>
            <person name="Zhao W."/>
            <person name="Sun Y."/>
            <person name="Zhang Z."/>
            <person name="Bao J."/>
            <person name="Han Y."/>
            <person name="Dong L."/>
            <person name="Ji J."/>
            <person name="Chen P."/>
            <person name="Wu S."/>
            <person name="Liu J."/>
            <person name="Xiao Y."/>
            <person name="Bu D."/>
            <person name="Tan J."/>
            <person name="Yang L."/>
            <person name="Ye C."/>
            <person name="Zhang J."/>
            <person name="Xu J."/>
            <person name="Zhou Y."/>
            <person name="Yu Y."/>
            <person name="Zhang B."/>
            <person name="Zhuang S."/>
            <person name="Wei H."/>
            <person name="Liu B."/>
            <person name="Lei M."/>
            <person name="Yu H."/>
            <person name="Li Y."/>
            <person name="Xu H."/>
            <person name="Wei S."/>
            <person name="He X."/>
            <person name="Fang L."/>
            <person name="Zhang Z."/>
            <person name="Zhang Y."/>
            <person name="Huang X."/>
            <person name="Su Z."/>
            <person name="Tong W."/>
            <person name="Li J."/>
            <person name="Tong Z."/>
            <person name="Li S."/>
            <person name="Ye J."/>
            <person name="Wang L."/>
            <person name="Fang L."/>
            <person name="Lei T."/>
            <person name="Chen C.-S."/>
            <person name="Chen H.-C."/>
            <person name="Xu Z."/>
            <person name="Li H."/>
            <person name="Huang H."/>
            <person name="Zhang F."/>
            <person name="Xu H."/>
            <person name="Li N."/>
            <person name="Zhao C."/>
            <person name="Li S."/>
            <person name="Dong L."/>
            <person name="Huang Y."/>
            <person name="Li L."/>
            <person name="Xi Y."/>
            <person name="Qi Q."/>
            <person name="Li W."/>
            <person name="Zhang B."/>
            <person name="Hu W."/>
            <person name="Zhang Y."/>
            <person name="Tian X."/>
            <person name="Jiao Y."/>
            <person name="Liang X."/>
            <person name="Jin J."/>
            <person name="Gao L."/>
            <person name="Zheng W."/>
            <person name="Hao B."/>
            <person name="Liu S.-M."/>
            <person name="Wang W."/>
            <person name="Yuan L."/>
            <person name="Cao M."/>
            <person name="McDermott J."/>
            <person name="Samudrala R."/>
            <person name="Wang J."/>
            <person name="Wong G.K.-S."/>
            <person name="Yang H."/>
        </authorList>
    </citation>
    <scope>NUCLEOTIDE SEQUENCE [LARGE SCALE GENOMIC DNA]</scope>
    <source>
        <strain>cv. Nipponbare</strain>
    </source>
</reference>
<reference key="7">
    <citation type="journal article" date="2003" name="Science">
        <title>Collection, mapping, and annotation of over 28,000 cDNA clones from japonica rice.</title>
        <authorList>
            <consortium name="The rice full-length cDNA consortium"/>
        </authorList>
    </citation>
    <scope>NUCLEOTIDE SEQUENCE [LARGE SCALE MRNA]</scope>
    <source>
        <strain>cv. Nipponbare</strain>
    </source>
</reference>
<reference key="8">
    <citation type="journal article" date="2004" name="Trends Plant Sci.">
        <title>Plant actin-related proteins.</title>
        <authorList>
            <person name="Kandasamy M.K."/>
            <person name="Deal R.B."/>
            <person name="McKinney E.C."/>
            <person name="Meagher R.B."/>
        </authorList>
    </citation>
    <scope>REVIEW</scope>
    <scope>GENE FAMILY</scope>
    <scope>NOMENCLATURE</scope>
</reference>
<feature type="chain" id="PRO_0000320545" description="Actin-related protein 8">
    <location>
        <begin position="1"/>
        <end position="484"/>
    </location>
</feature>
<feature type="domain" description="F-box" evidence="2">
    <location>
        <begin position="44"/>
        <end position="90"/>
    </location>
</feature>
<feature type="binding site" evidence="1">
    <location>
        <begin position="262"/>
        <end position="265"/>
    </location>
    <ligand>
        <name>ATP</name>
        <dbReference type="ChEBI" id="CHEBI:30616"/>
    </ligand>
</feature>
<protein>
    <recommendedName>
        <fullName>Actin-related protein 8</fullName>
    </recommendedName>
    <alternativeName>
        <fullName>F-box protein ARP8</fullName>
    </alternativeName>
</protein>
<organism>
    <name type="scientific">Oryza sativa subsp. japonica</name>
    <name type="common">Rice</name>
    <dbReference type="NCBI Taxonomy" id="39947"/>
    <lineage>
        <taxon>Eukaryota</taxon>
        <taxon>Viridiplantae</taxon>
        <taxon>Streptophyta</taxon>
        <taxon>Embryophyta</taxon>
        <taxon>Tracheophyta</taxon>
        <taxon>Spermatophyta</taxon>
        <taxon>Magnoliopsida</taxon>
        <taxon>Liliopsida</taxon>
        <taxon>Poales</taxon>
        <taxon>Poaceae</taxon>
        <taxon>BOP clade</taxon>
        <taxon>Oryzoideae</taxon>
        <taxon>Oryzeae</taxon>
        <taxon>Oryzinae</taxon>
        <taxon>Oryza</taxon>
        <taxon>Oryza sativa</taxon>
    </lineage>
</organism>
<accession>Q7XR80</accession>
<accession>A3AYE8</accession>
<accession>A8WAZ7</accession>
<accession>Q01ML6</accession>
<accession>Q0J983</accession>
<accession>Q259W4</accession>
<dbReference type="EMBL" id="EU214983">
    <property type="protein sequence ID" value="ABW90794.1"/>
    <property type="molecule type" value="Genomic_DNA"/>
</dbReference>
<dbReference type="EMBL" id="EU214984">
    <property type="protein sequence ID" value="ABW90795.1"/>
    <property type="molecule type" value="Genomic_DNA"/>
</dbReference>
<dbReference type="EMBL" id="EU214985">
    <property type="protein sequence ID" value="ABW90796.1"/>
    <property type="molecule type" value="Genomic_DNA"/>
</dbReference>
<dbReference type="EMBL" id="EU214986">
    <property type="protein sequence ID" value="ABW90797.1"/>
    <property type="molecule type" value="Genomic_DNA"/>
</dbReference>
<dbReference type="EMBL" id="EU214987">
    <property type="protein sequence ID" value="ABW90798.1"/>
    <property type="molecule type" value="Genomic_DNA"/>
</dbReference>
<dbReference type="EMBL" id="EU214988">
    <property type="protein sequence ID" value="ABW90799.1"/>
    <property type="molecule type" value="Genomic_DNA"/>
</dbReference>
<dbReference type="EMBL" id="EU215015">
    <property type="protein sequence ID" value="ABW90826.1"/>
    <property type="molecule type" value="Genomic_DNA"/>
</dbReference>
<dbReference type="EMBL" id="EU215016">
    <property type="protein sequence ID" value="ABW90827.1"/>
    <property type="molecule type" value="Genomic_DNA"/>
</dbReference>
<dbReference type="EMBL" id="EU215017">
    <property type="protein sequence ID" value="ABW90828.1"/>
    <property type="molecule type" value="Genomic_DNA"/>
</dbReference>
<dbReference type="EMBL" id="EU215018">
    <property type="protein sequence ID" value="ABW90829.1"/>
    <property type="molecule type" value="Genomic_DNA"/>
</dbReference>
<dbReference type="EMBL" id="EU215019">
    <property type="protein sequence ID" value="ABW90830.1"/>
    <property type="molecule type" value="Genomic_DNA"/>
</dbReference>
<dbReference type="EMBL" id="EU215020">
    <property type="protein sequence ID" value="ABW90831.1"/>
    <property type="molecule type" value="Genomic_DNA"/>
</dbReference>
<dbReference type="EMBL" id="EU215021">
    <property type="protein sequence ID" value="ABW90832.1"/>
    <property type="molecule type" value="Genomic_DNA"/>
</dbReference>
<dbReference type="EMBL" id="EU215022">
    <property type="protein sequence ID" value="ABW90833.1"/>
    <property type="molecule type" value="Genomic_DNA"/>
</dbReference>
<dbReference type="EMBL" id="EU215023">
    <property type="protein sequence ID" value="ABW90834.1"/>
    <property type="molecule type" value="Genomic_DNA"/>
</dbReference>
<dbReference type="EMBL" id="EU215024">
    <property type="protein sequence ID" value="ABW90835.1"/>
    <property type="molecule type" value="Genomic_DNA"/>
</dbReference>
<dbReference type="EMBL" id="EU215025">
    <property type="protein sequence ID" value="ABW90836.1"/>
    <property type="molecule type" value="Genomic_DNA"/>
</dbReference>
<dbReference type="EMBL" id="EU215026">
    <property type="protein sequence ID" value="ABW90837.1"/>
    <property type="molecule type" value="Genomic_DNA"/>
</dbReference>
<dbReference type="EMBL" id="EU215027">
    <property type="protein sequence ID" value="ABW90838.1"/>
    <property type="molecule type" value="Genomic_DNA"/>
</dbReference>
<dbReference type="EMBL" id="EU215028">
    <property type="protein sequence ID" value="ABW90839.1"/>
    <property type="molecule type" value="Genomic_DNA"/>
</dbReference>
<dbReference type="EMBL" id="EU215029">
    <property type="protein sequence ID" value="ABW90840.1"/>
    <property type="molecule type" value="Genomic_DNA"/>
</dbReference>
<dbReference type="EMBL" id="EU215030">
    <property type="protein sequence ID" value="ABW90841.1"/>
    <property type="molecule type" value="Genomic_DNA"/>
</dbReference>
<dbReference type="EMBL" id="EU215031">
    <property type="protein sequence ID" value="ABW90842.1"/>
    <property type="molecule type" value="Genomic_DNA"/>
</dbReference>
<dbReference type="EMBL" id="EU215032">
    <property type="protein sequence ID" value="ABW90843.1"/>
    <property type="molecule type" value="Genomic_DNA"/>
</dbReference>
<dbReference type="EMBL" id="EU215033">
    <property type="protein sequence ID" value="ABW90844.1"/>
    <property type="molecule type" value="Genomic_DNA"/>
</dbReference>
<dbReference type="EMBL" id="EU215034">
    <property type="protein sequence ID" value="ABW90845.1"/>
    <property type="molecule type" value="Genomic_DNA"/>
</dbReference>
<dbReference type="EMBL" id="EU215035">
    <property type="protein sequence ID" value="ABW90846.1"/>
    <property type="molecule type" value="Genomic_DNA"/>
</dbReference>
<dbReference type="EMBL" id="EU215036">
    <property type="protein sequence ID" value="ABW90847.1"/>
    <property type="molecule type" value="Genomic_DNA"/>
</dbReference>
<dbReference type="EMBL" id="EU215037">
    <property type="protein sequence ID" value="ABW90848.1"/>
    <property type="molecule type" value="Genomic_DNA"/>
</dbReference>
<dbReference type="EMBL" id="EU215038">
    <property type="protein sequence ID" value="ABW90849.1"/>
    <property type="molecule type" value="Genomic_DNA"/>
</dbReference>
<dbReference type="EMBL" id="EU215039">
    <property type="protein sequence ID" value="ABW90850.1"/>
    <property type="molecule type" value="Genomic_DNA"/>
</dbReference>
<dbReference type="EMBL" id="EU215041">
    <property type="protein sequence ID" value="ABW90852.1"/>
    <property type="molecule type" value="Genomic_DNA"/>
</dbReference>
<dbReference type="EMBL" id="EU215042">
    <property type="protein sequence ID" value="ABW90853.1"/>
    <property type="molecule type" value="Genomic_DNA"/>
</dbReference>
<dbReference type="EMBL" id="EU215043">
    <property type="protein sequence ID" value="ABW90854.1"/>
    <property type="molecule type" value="Genomic_DNA"/>
</dbReference>
<dbReference type="EMBL" id="EU215044">
    <property type="protein sequence ID" value="ABW90855.1"/>
    <property type="molecule type" value="Genomic_DNA"/>
</dbReference>
<dbReference type="EMBL" id="EU215045">
    <property type="protein sequence ID" value="ABW90856.1"/>
    <property type="molecule type" value="Genomic_DNA"/>
</dbReference>
<dbReference type="EMBL" id="EU215046">
    <property type="protein sequence ID" value="ABW90857.1"/>
    <property type="molecule type" value="Genomic_DNA"/>
</dbReference>
<dbReference type="EMBL" id="EU215047">
    <property type="protein sequence ID" value="ABW90858.1"/>
    <property type="molecule type" value="Genomic_DNA"/>
</dbReference>
<dbReference type="EMBL" id="EU215048">
    <property type="protein sequence ID" value="ABW90859.1"/>
    <property type="molecule type" value="Genomic_DNA"/>
</dbReference>
<dbReference type="EMBL" id="EU215049">
    <property type="protein sequence ID" value="ABW90860.1"/>
    <property type="molecule type" value="Genomic_DNA"/>
</dbReference>
<dbReference type="EMBL" id="EU215050">
    <property type="protein sequence ID" value="ABW90861.1"/>
    <property type="molecule type" value="Genomic_DNA"/>
</dbReference>
<dbReference type="EMBL" id="EU215051">
    <property type="protein sequence ID" value="ABW90862.1"/>
    <property type="molecule type" value="Genomic_DNA"/>
</dbReference>
<dbReference type="EMBL" id="EU215052">
    <property type="protein sequence ID" value="ABW90863.1"/>
    <property type="molecule type" value="Genomic_DNA"/>
</dbReference>
<dbReference type="EMBL" id="EU215053">
    <property type="protein sequence ID" value="ABW90864.1"/>
    <property type="molecule type" value="Genomic_DNA"/>
</dbReference>
<dbReference type="EMBL" id="EU215054">
    <property type="protein sequence ID" value="ABW90865.1"/>
    <property type="molecule type" value="Genomic_DNA"/>
</dbReference>
<dbReference type="EMBL" id="AL606619">
    <property type="protein sequence ID" value="CAE02800.1"/>
    <property type="molecule type" value="Genomic_DNA"/>
</dbReference>
<dbReference type="EMBL" id="AL732340">
    <property type="protein sequence ID" value="CAJ86197.1"/>
    <property type="status" value="ALT_SEQ"/>
    <property type="molecule type" value="Genomic_DNA"/>
</dbReference>
<dbReference type="EMBL" id="AP008210">
    <property type="protein sequence ID" value="BAF16104.1"/>
    <property type="status" value="ALT_SEQ"/>
    <property type="molecule type" value="Genomic_DNA"/>
</dbReference>
<dbReference type="EMBL" id="AP014960">
    <property type="status" value="NOT_ANNOTATED_CDS"/>
    <property type="molecule type" value="Genomic_DNA"/>
</dbReference>
<dbReference type="EMBL" id="CM000141">
    <property type="status" value="NOT_ANNOTATED_CDS"/>
    <property type="molecule type" value="Genomic_DNA"/>
</dbReference>
<dbReference type="EMBL" id="AK100366">
    <property type="status" value="NOT_ANNOTATED_CDS"/>
    <property type="molecule type" value="mRNA"/>
</dbReference>
<dbReference type="SMR" id="Q7XR80"/>
<dbReference type="FunCoup" id="Q7XR80">
    <property type="interactions" value="1580"/>
</dbReference>
<dbReference type="STRING" id="39947.Q7XR80"/>
<dbReference type="PaxDb" id="39947-Q7XR80"/>
<dbReference type="KEGG" id="dosa:Os04g0667700"/>
<dbReference type="eggNOG" id="KOG0676">
    <property type="taxonomic scope" value="Eukaryota"/>
</dbReference>
<dbReference type="HOGENOM" id="CLU_072971_1_0_1"/>
<dbReference type="InParanoid" id="Q7XR80"/>
<dbReference type="Proteomes" id="UP000000763">
    <property type="component" value="Chromosome 4"/>
</dbReference>
<dbReference type="Proteomes" id="UP000007752">
    <property type="component" value="Chromosome 4"/>
</dbReference>
<dbReference type="Proteomes" id="UP000059680">
    <property type="component" value="Chromosome 4"/>
</dbReference>
<dbReference type="GO" id="GO:0015629">
    <property type="term" value="C:actin cytoskeleton"/>
    <property type="evidence" value="ECO:0000318"/>
    <property type="project" value="GO_Central"/>
</dbReference>
<dbReference type="GO" id="GO:0005737">
    <property type="term" value="C:cytoplasm"/>
    <property type="evidence" value="ECO:0007669"/>
    <property type="project" value="UniProtKB-SubCell"/>
</dbReference>
<dbReference type="GO" id="GO:0005730">
    <property type="term" value="C:nucleolus"/>
    <property type="evidence" value="ECO:0007669"/>
    <property type="project" value="UniProtKB-SubCell"/>
</dbReference>
<dbReference type="GO" id="GO:0005524">
    <property type="term" value="F:ATP binding"/>
    <property type="evidence" value="ECO:0007669"/>
    <property type="project" value="UniProtKB-KW"/>
</dbReference>
<dbReference type="CDD" id="cd13396">
    <property type="entry name" value="ASKHA_NBD_AtArp8-like"/>
    <property type="match status" value="1"/>
</dbReference>
<dbReference type="Gene3D" id="1.20.1280.50">
    <property type="match status" value="1"/>
</dbReference>
<dbReference type="Gene3D" id="3.30.420.40">
    <property type="match status" value="2"/>
</dbReference>
<dbReference type="Gene3D" id="3.90.640.10">
    <property type="entry name" value="Actin, Chain A, domain 4"/>
    <property type="match status" value="1"/>
</dbReference>
<dbReference type="InterPro" id="IPR004000">
    <property type="entry name" value="Actin"/>
</dbReference>
<dbReference type="InterPro" id="IPR043129">
    <property type="entry name" value="ATPase_NBD"/>
</dbReference>
<dbReference type="InterPro" id="IPR036047">
    <property type="entry name" value="F-box-like_dom_sf"/>
</dbReference>
<dbReference type="InterPro" id="IPR001810">
    <property type="entry name" value="F-box_dom"/>
</dbReference>
<dbReference type="PANTHER" id="PTHR11937">
    <property type="entry name" value="ACTIN"/>
    <property type="match status" value="1"/>
</dbReference>
<dbReference type="Pfam" id="PF00022">
    <property type="entry name" value="Actin"/>
    <property type="match status" value="1"/>
</dbReference>
<dbReference type="Pfam" id="PF12937">
    <property type="entry name" value="F-box-like"/>
    <property type="match status" value="1"/>
</dbReference>
<dbReference type="SMART" id="SM00268">
    <property type="entry name" value="ACTIN"/>
    <property type="match status" value="1"/>
</dbReference>
<dbReference type="SMART" id="SM00256">
    <property type="entry name" value="FBOX"/>
    <property type="match status" value="1"/>
</dbReference>
<dbReference type="SUPFAM" id="SSF53067">
    <property type="entry name" value="Actin-like ATPase domain"/>
    <property type="match status" value="2"/>
</dbReference>
<dbReference type="SUPFAM" id="SSF81383">
    <property type="entry name" value="F-box domain"/>
    <property type="match status" value="1"/>
</dbReference>
<dbReference type="PROSITE" id="PS50181">
    <property type="entry name" value="FBOX"/>
    <property type="match status" value="1"/>
</dbReference>
<keyword id="KW-0067">ATP-binding</keyword>
<keyword id="KW-0963">Cytoplasm</keyword>
<keyword id="KW-0547">Nucleotide-binding</keyword>
<keyword id="KW-0539">Nucleus</keyword>
<keyword id="KW-1185">Reference proteome</keyword>
<proteinExistence type="evidence at transcript level"/>
<name>ARP8_ORYSJ</name>
<evidence type="ECO:0000250" key="1"/>
<evidence type="ECO:0000255" key="2">
    <source>
        <dbReference type="PROSITE-ProRule" id="PRU00080"/>
    </source>
</evidence>
<evidence type="ECO:0000305" key="3"/>